<keyword id="KW-1185">Reference proteome</keyword>
<keyword id="KW-0687">Ribonucleoprotein</keyword>
<keyword id="KW-0689">Ribosomal protein</keyword>
<keyword id="KW-0694">RNA-binding</keyword>
<keyword id="KW-0699">rRNA-binding</keyword>
<feature type="chain" id="PRO_1000003494" description="Small ribosomal subunit protein bS18">
    <location>
        <begin position="1"/>
        <end position="87"/>
    </location>
</feature>
<name>RS18_OLEA2</name>
<dbReference type="EMBL" id="CP000112">
    <property type="protein sequence ID" value="ABB38210.1"/>
    <property type="molecule type" value="Genomic_DNA"/>
</dbReference>
<dbReference type="RefSeq" id="WP_011367382.1">
    <property type="nucleotide sequence ID" value="NC_007519.1"/>
</dbReference>
<dbReference type="SMR" id="Q312D6"/>
<dbReference type="STRING" id="207559.Dde_1411"/>
<dbReference type="KEGG" id="dde:Dde_1411"/>
<dbReference type="eggNOG" id="COG0238">
    <property type="taxonomic scope" value="Bacteria"/>
</dbReference>
<dbReference type="HOGENOM" id="CLU_148710_2_2_7"/>
<dbReference type="Proteomes" id="UP000002710">
    <property type="component" value="Chromosome"/>
</dbReference>
<dbReference type="GO" id="GO:0022627">
    <property type="term" value="C:cytosolic small ribosomal subunit"/>
    <property type="evidence" value="ECO:0007669"/>
    <property type="project" value="TreeGrafter"/>
</dbReference>
<dbReference type="GO" id="GO:0070181">
    <property type="term" value="F:small ribosomal subunit rRNA binding"/>
    <property type="evidence" value="ECO:0007669"/>
    <property type="project" value="TreeGrafter"/>
</dbReference>
<dbReference type="GO" id="GO:0003735">
    <property type="term" value="F:structural constituent of ribosome"/>
    <property type="evidence" value="ECO:0007669"/>
    <property type="project" value="InterPro"/>
</dbReference>
<dbReference type="GO" id="GO:0006412">
    <property type="term" value="P:translation"/>
    <property type="evidence" value="ECO:0007669"/>
    <property type="project" value="UniProtKB-UniRule"/>
</dbReference>
<dbReference type="Gene3D" id="4.10.640.10">
    <property type="entry name" value="Ribosomal protein S18"/>
    <property type="match status" value="1"/>
</dbReference>
<dbReference type="HAMAP" id="MF_00270">
    <property type="entry name" value="Ribosomal_bS18"/>
    <property type="match status" value="1"/>
</dbReference>
<dbReference type="InterPro" id="IPR001648">
    <property type="entry name" value="Ribosomal_bS18"/>
</dbReference>
<dbReference type="InterPro" id="IPR018275">
    <property type="entry name" value="Ribosomal_bS18_CS"/>
</dbReference>
<dbReference type="InterPro" id="IPR036870">
    <property type="entry name" value="Ribosomal_bS18_sf"/>
</dbReference>
<dbReference type="NCBIfam" id="TIGR00165">
    <property type="entry name" value="S18"/>
    <property type="match status" value="1"/>
</dbReference>
<dbReference type="PANTHER" id="PTHR13479">
    <property type="entry name" value="30S RIBOSOMAL PROTEIN S18"/>
    <property type="match status" value="1"/>
</dbReference>
<dbReference type="PANTHER" id="PTHR13479:SF40">
    <property type="entry name" value="SMALL RIBOSOMAL SUBUNIT PROTEIN BS18M"/>
    <property type="match status" value="1"/>
</dbReference>
<dbReference type="Pfam" id="PF01084">
    <property type="entry name" value="Ribosomal_S18"/>
    <property type="match status" value="1"/>
</dbReference>
<dbReference type="PRINTS" id="PR00974">
    <property type="entry name" value="RIBOSOMALS18"/>
</dbReference>
<dbReference type="SUPFAM" id="SSF46911">
    <property type="entry name" value="Ribosomal protein S18"/>
    <property type="match status" value="1"/>
</dbReference>
<dbReference type="PROSITE" id="PS00057">
    <property type="entry name" value="RIBOSOMAL_S18"/>
    <property type="match status" value="1"/>
</dbReference>
<protein>
    <recommendedName>
        <fullName evidence="1">Small ribosomal subunit protein bS18</fullName>
    </recommendedName>
    <alternativeName>
        <fullName evidence="2">30S ribosomal protein S18</fullName>
    </alternativeName>
</protein>
<comment type="function">
    <text evidence="1">Binds as a heterodimer with protein bS6 to the central domain of the 16S rRNA, where it helps stabilize the platform of the 30S subunit.</text>
</comment>
<comment type="subunit">
    <text evidence="1">Part of the 30S ribosomal subunit. Forms a tight heterodimer with protein bS6.</text>
</comment>
<comment type="similarity">
    <text evidence="1">Belongs to the bacterial ribosomal protein bS18 family.</text>
</comment>
<accession>Q312D6</accession>
<reference key="1">
    <citation type="journal article" date="2011" name="J. Bacteriol.">
        <title>Complete genome sequence and updated annotation of Desulfovibrio alaskensis G20.</title>
        <authorList>
            <person name="Hauser L.J."/>
            <person name="Land M.L."/>
            <person name="Brown S.D."/>
            <person name="Larimer F."/>
            <person name="Keller K.L."/>
            <person name="Rapp-Giles B.J."/>
            <person name="Price M.N."/>
            <person name="Lin M."/>
            <person name="Bruce D.C."/>
            <person name="Detter J.C."/>
            <person name="Tapia R."/>
            <person name="Han C.S."/>
            <person name="Goodwin L.A."/>
            <person name="Cheng J.F."/>
            <person name="Pitluck S."/>
            <person name="Copeland A."/>
            <person name="Lucas S."/>
            <person name="Nolan M."/>
            <person name="Lapidus A.L."/>
            <person name="Palumbo A.V."/>
            <person name="Wall J.D."/>
        </authorList>
    </citation>
    <scope>NUCLEOTIDE SEQUENCE [LARGE SCALE GENOMIC DNA]</scope>
    <source>
        <strain>ATCC BAA-1058 / DSM 17464 / G20</strain>
    </source>
</reference>
<proteinExistence type="inferred from homology"/>
<gene>
    <name evidence="1" type="primary">rpsR</name>
    <name type="ordered locus">Dde_1411</name>
</gene>
<organism>
    <name type="scientific">Oleidesulfovibrio alaskensis (strain ATCC BAA-1058 / DSM 17464 / G20)</name>
    <name type="common">Desulfovibrio alaskensis</name>
    <dbReference type="NCBI Taxonomy" id="207559"/>
    <lineage>
        <taxon>Bacteria</taxon>
        <taxon>Pseudomonadati</taxon>
        <taxon>Thermodesulfobacteriota</taxon>
        <taxon>Desulfovibrionia</taxon>
        <taxon>Desulfovibrionales</taxon>
        <taxon>Desulfovibrionaceae</taxon>
        <taxon>Oleidesulfovibrio</taxon>
    </lineage>
</organism>
<evidence type="ECO:0000255" key="1">
    <source>
        <dbReference type="HAMAP-Rule" id="MF_00270"/>
    </source>
</evidence>
<evidence type="ECO:0000305" key="2"/>
<sequence>MAFKKRFTPRRKFCRFCADKDLPINYKRPDILRDFVTERGKIIARRITGTCAHHQRLLTTEIKRARQMALLFYTSTHSSDVLKKSSL</sequence>